<keyword id="KW-0025">Alternative splicing</keyword>
<keyword id="KW-1003">Cell membrane</keyword>
<keyword id="KW-1015">Disulfide bond</keyword>
<keyword id="KW-0256">Endoplasmic reticulum</keyword>
<keyword id="KW-0325">Glycoprotein</keyword>
<keyword id="KW-0472">Membrane</keyword>
<keyword id="KW-0492">Microsome</keyword>
<keyword id="KW-0597">Phosphoprotein</keyword>
<keyword id="KW-1185">Reference proteome</keyword>
<keyword id="KW-0703">Sarcoplasmic reticulum</keyword>
<keyword id="KW-0812">Transmembrane</keyword>
<keyword id="KW-1133">Transmembrane helix</keyword>
<feature type="chain" id="PRO_0000430563" description="Triadin">
    <location>
        <begin position="1"/>
        <end position="687"/>
    </location>
</feature>
<feature type="topological domain" description="Cytoplasmic" evidence="4">
    <location>
        <begin position="1"/>
        <end position="47"/>
    </location>
</feature>
<feature type="transmembrane region" description="Helical" evidence="4">
    <location>
        <begin position="48"/>
        <end position="68"/>
    </location>
</feature>
<feature type="topological domain" description="Lumenal" evidence="4">
    <location>
        <begin position="69"/>
        <end position="687"/>
    </location>
</feature>
<feature type="region of interest" description="Disordered" evidence="5">
    <location>
        <begin position="117"/>
        <end position="265"/>
    </location>
</feature>
<feature type="region of interest" description="Disordered" evidence="5">
    <location>
        <begin position="280"/>
        <end position="643"/>
    </location>
</feature>
<feature type="region of interest" description="Disordered" evidence="5">
    <location>
        <begin position="660"/>
        <end position="687"/>
    </location>
</feature>
<feature type="compositionally biased region" description="Acidic residues" evidence="5">
    <location>
        <begin position="117"/>
        <end position="130"/>
    </location>
</feature>
<feature type="compositionally biased region" description="Basic and acidic residues" evidence="5">
    <location>
        <begin position="131"/>
        <end position="265"/>
    </location>
</feature>
<feature type="compositionally biased region" description="Polar residues" evidence="5">
    <location>
        <begin position="295"/>
        <end position="306"/>
    </location>
</feature>
<feature type="compositionally biased region" description="Basic and acidic residues" evidence="5">
    <location>
        <begin position="307"/>
        <end position="356"/>
    </location>
</feature>
<feature type="compositionally biased region" description="Low complexity" evidence="5">
    <location>
        <begin position="357"/>
        <end position="370"/>
    </location>
</feature>
<feature type="compositionally biased region" description="Basic and acidic residues" evidence="5">
    <location>
        <begin position="371"/>
        <end position="390"/>
    </location>
</feature>
<feature type="compositionally biased region" description="Basic and acidic residues" evidence="5">
    <location>
        <begin position="396"/>
        <end position="431"/>
    </location>
</feature>
<feature type="compositionally biased region" description="Basic and acidic residues" evidence="5">
    <location>
        <begin position="442"/>
        <end position="459"/>
    </location>
</feature>
<feature type="compositionally biased region" description="Basic and acidic residues" evidence="5">
    <location>
        <begin position="466"/>
        <end position="501"/>
    </location>
</feature>
<feature type="compositionally biased region" description="Basic and acidic residues" evidence="5">
    <location>
        <begin position="539"/>
        <end position="583"/>
    </location>
</feature>
<feature type="compositionally biased region" description="Basic and acidic residues" evidence="5">
    <location>
        <begin position="594"/>
        <end position="630"/>
    </location>
</feature>
<feature type="compositionally biased region" description="Polar residues" evidence="5">
    <location>
        <begin position="631"/>
        <end position="643"/>
    </location>
</feature>
<feature type="compositionally biased region" description="Polar residues" evidence="5">
    <location>
        <begin position="667"/>
        <end position="687"/>
    </location>
</feature>
<feature type="modified residue" description="Phosphoserine" evidence="15">
    <location>
        <position position="303"/>
    </location>
</feature>
<feature type="modified residue" description="Phosphoserine" evidence="15">
    <location>
        <position position="306"/>
    </location>
</feature>
<feature type="glycosylation site" description="N-linked (GlcNAc...) asparagine" evidence="4">
    <location>
        <position position="514"/>
    </location>
</feature>
<feature type="disulfide bond" description="Interchain" evidence="3">
    <location>
        <position position="270"/>
    </location>
</feature>
<feature type="disulfide bond" description="Interchain" evidence="3">
    <location>
        <position position="649"/>
    </location>
</feature>
<feature type="splice variant" id="VSP_056802" description="In isoform 3." evidence="10">
    <original>DQYAFCRYMIDMFVHGDLKPGQS</original>
    <variation>GKLSKEEKEAVGGPKRILDKKQI</variation>
    <location>
        <begin position="265"/>
        <end position="287"/>
    </location>
</feature>
<feature type="splice variant" id="VSP_056803" description="In isoform 3." evidence="10">
    <location>
        <begin position="288"/>
        <end position="687"/>
    </location>
</feature>
<feature type="splice variant" id="VSP_056804" description="In isoform 4." evidence="10">
    <original>ALHG</original>
    <variation>GKHS</variation>
    <location>
        <begin position="439"/>
        <end position="442"/>
    </location>
</feature>
<feature type="splice variant" id="VSP_056805" description="In isoform 4." evidence="10">
    <location>
        <begin position="443"/>
        <end position="687"/>
    </location>
</feature>
<feature type="splice variant" id="VSP_056806" description="In isoform 2." evidence="10">
    <original>DVKPKL</original>
    <variation>KKSEAG</variation>
    <location>
        <begin position="456"/>
        <end position="461"/>
    </location>
</feature>
<feature type="splice variant" id="VSP_056807" description="In isoform 2." evidence="10">
    <location>
        <begin position="462"/>
        <end position="687"/>
    </location>
</feature>
<feature type="sequence conflict" description="In Ref. 1; CAB64603, 2; CAH23274/CAH23273 and 3; AAF29540." evidence="10" ref="1 2 3">
    <original>A</original>
    <variation>V</variation>
    <location>
        <position position="95"/>
    </location>
</feature>
<feature type="sequence conflict" description="In Ref. 1; CAB64603, 2; CAH23274/CAH23273 and 3; AAF29540." evidence="10" ref="1 2 3">
    <original>E</original>
    <variation>D</variation>
    <location>
        <position position="143"/>
    </location>
</feature>
<proteinExistence type="evidence at protein level"/>
<gene>
    <name evidence="14" type="primary">Trdn</name>
</gene>
<accession>Q9QX75</accession>
<accession>E9PTN7</accession>
<accession>Q5DVI6</accession>
<accession>Q5DVI7</accession>
<accession>Q9JKZ5</accession>
<accession>Q9JKZ6</accession>
<accession>Q9QX76</accession>
<comment type="function">
    <text evidence="1">Contributes to the regulation of lumenal Ca2+ release via the sarcoplasmic reticulum calcium release channels RYR1 and RYR2, a key step in triggering skeletal and heart muscle contraction. Required for normal organization of the triad junction, where T-tubules and the sarcoplasmic reticulum terminal cisternae are in close contact. Required for normal skeletal muscle strength. Plays a role in excitation-contraction coupling in the heart and in regulating the rate of heart beats.</text>
</comment>
<comment type="subunit">
    <text evidence="2 3 7">Homooligomer of variable subunit number; disulfide-linked. Interacts with CASQ1 in skeletal muscle. Interacts with CASQ2 (By similarity). Interacts with RYR1 in skeletal muscle.</text>
</comment>
<comment type="subcellular location">
    <subcellularLocation>
        <location evidence="3">Sarcoplasmic reticulum membrane</location>
        <topology evidence="3">Single-pass type II membrane protein</topology>
    </subcellularLocation>
    <subcellularLocation>
        <location evidence="7">Microsome</location>
    </subcellularLocation>
    <subcellularLocation>
        <location evidence="7">Cell membrane</location>
        <location evidence="7">Sarcolemma</location>
    </subcellularLocation>
</comment>
<comment type="alternative products">
    <event type="alternative splicing"/>
    <isoform>
        <id>Q9QX75-1</id>
        <name>1</name>
        <name>Triadin 95kDa</name>
        <name evidence="8">Trisk 95</name>
        <sequence type="displayed"/>
    </isoform>
    <isoform>
        <id>Q9QX75-2</id>
        <name>2</name>
        <name>Triadin 51 kDa</name>
        <name evidence="8">Trisk 51</name>
        <sequence type="described" ref="VSP_056806 VSP_056807"/>
    </isoform>
    <isoform>
        <id>Q9QX75-3</id>
        <name>3</name>
        <name>Triadin 32 kDa</name>
        <name evidence="9">Trisk 32</name>
        <sequence type="described" ref="VSP_056802 VSP_056803"/>
    </isoform>
    <isoform>
        <id>Q9QX75-4</id>
        <name>4</name>
        <name>Triadin 49 kDa</name>
        <name evidence="9">Trisk 49</name>
        <sequence type="described" ref="VSP_056804 VSP_056805"/>
    </isoform>
</comment>
<comment type="tissue specificity">
    <text evidence="6 7">Detected in skeletal muscle (at protein level). Detected in skeletal muscle.</text>
</comment>
<comment type="PTM">
    <text evidence="3">Phosphorylated by CaMK2.</text>
</comment>
<comment type="PTM">
    <text evidence="6">N-glycosylated.</text>
</comment>
<dbReference type="EMBL" id="AJ243303">
    <property type="protein sequence ID" value="CAB64603.1"/>
    <property type="molecule type" value="mRNA"/>
</dbReference>
<dbReference type="EMBL" id="AJ243304">
    <property type="protein sequence ID" value="CAB64604.1"/>
    <property type="molecule type" value="mRNA"/>
</dbReference>
<dbReference type="EMBL" id="AJ812275">
    <property type="protein sequence ID" value="CAH23273.1"/>
    <property type="molecule type" value="mRNA"/>
</dbReference>
<dbReference type="EMBL" id="AJ812276">
    <property type="protein sequence ID" value="CAH23274.1"/>
    <property type="molecule type" value="mRNA"/>
</dbReference>
<dbReference type="EMBL" id="AF220558">
    <property type="protein sequence ID" value="AAF29539.1"/>
    <property type="molecule type" value="mRNA"/>
</dbReference>
<dbReference type="EMBL" id="AF220559">
    <property type="protein sequence ID" value="AAF29540.1"/>
    <property type="molecule type" value="mRNA"/>
</dbReference>
<dbReference type="EMBL" id="AABR06001232">
    <property type="status" value="NOT_ANNOTATED_CDS"/>
    <property type="molecule type" value="Genomic_DNA"/>
</dbReference>
<dbReference type="EMBL" id="AABR06001233">
    <property type="status" value="NOT_ANNOTATED_CDS"/>
    <property type="molecule type" value="Genomic_DNA"/>
</dbReference>
<dbReference type="EMBL" id="AABR06001234">
    <property type="status" value="NOT_ANNOTATED_CDS"/>
    <property type="molecule type" value="Genomic_DNA"/>
</dbReference>
<dbReference type="EMBL" id="AABR06001235">
    <property type="status" value="NOT_ANNOTATED_CDS"/>
    <property type="molecule type" value="Genomic_DNA"/>
</dbReference>
<dbReference type="EMBL" id="AABR06001236">
    <property type="status" value="NOT_ANNOTATED_CDS"/>
    <property type="molecule type" value="Genomic_DNA"/>
</dbReference>
<dbReference type="EMBL" id="AABR06001237">
    <property type="status" value="NOT_ANNOTATED_CDS"/>
    <property type="molecule type" value="Genomic_DNA"/>
</dbReference>
<dbReference type="EMBL" id="AABR06001238">
    <property type="status" value="NOT_ANNOTATED_CDS"/>
    <property type="molecule type" value="Genomic_DNA"/>
</dbReference>
<dbReference type="EMBL" id="AABR06001239">
    <property type="status" value="NOT_ANNOTATED_CDS"/>
    <property type="molecule type" value="Genomic_DNA"/>
</dbReference>
<dbReference type="EMBL" id="AABR06001240">
    <property type="status" value="NOT_ANNOTATED_CDS"/>
    <property type="molecule type" value="Genomic_DNA"/>
</dbReference>
<dbReference type="EMBL" id="AABR06001241">
    <property type="status" value="NOT_ANNOTATED_CDS"/>
    <property type="molecule type" value="Genomic_DNA"/>
</dbReference>
<dbReference type="EMBL" id="AABR06001242">
    <property type="status" value="NOT_ANNOTATED_CDS"/>
    <property type="molecule type" value="Genomic_DNA"/>
</dbReference>
<dbReference type="EMBL" id="AABR06001243">
    <property type="status" value="NOT_ANNOTATED_CDS"/>
    <property type="molecule type" value="Genomic_DNA"/>
</dbReference>
<dbReference type="EMBL" id="CH474002">
    <property type="protein sequence ID" value="EDL87717.1"/>
    <property type="molecule type" value="Genomic_DNA"/>
</dbReference>
<dbReference type="RefSeq" id="NP_067698.1">
    <property type="nucleotide sequence ID" value="NM_021666.2"/>
</dbReference>
<dbReference type="FunCoup" id="Q9QX75">
    <property type="interactions" value="67"/>
</dbReference>
<dbReference type="STRING" id="10116.ENSRNOP00000041570"/>
<dbReference type="GlyCosmos" id="Q9QX75">
    <property type="glycosylation" value="1 site, No reported glycans"/>
</dbReference>
<dbReference type="GlyGen" id="Q9QX75">
    <property type="glycosylation" value="3 sites"/>
</dbReference>
<dbReference type="iPTMnet" id="Q9QX75"/>
<dbReference type="PhosphoSitePlus" id="Q9QX75"/>
<dbReference type="PaxDb" id="10116-ENSRNOP00000041570"/>
<dbReference type="GeneID" id="59299"/>
<dbReference type="KEGG" id="rno:59299"/>
<dbReference type="UCSC" id="RGD:619856">
    <property type="organism name" value="rat"/>
</dbReference>
<dbReference type="AGR" id="RGD:619856"/>
<dbReference type="CTD" id="10345"/>
<dbReference type="RGD" id="619856">
    <property type="gene designation" value="Trdn"/>
</dbReference>
<dbReference type="VEuPathDB" id="HostDB:ENSRNOG00000012609"/>
<dbReference type="eggNOG" id="ENOG502S0X4">
    <property type="taxonomic scope" value="Eukaryota"/>
</dbReference>
<dbReference type="InParanoid" id="Q9QX75"/>
<dbReference type="TreeFam" id="TF350396"/>
<dbReference type="Reactome" id="R-RNO-2672351">
    <property type="pathway name" value="Stimuli-sensing channels"/>
</dbReference>
<dbReference type="Reactome" id="R-RNO-5578775">
    <property type="pathway name" value="Ion homeostasis"/>
</dbReference>
<dbReference type="PRO" id="PR:Q9QX75"/>
<dbReference type="Proteomes" id="UP000002494">
    <property type="component" value="Chromosome 1"/>
</dbReference>
<dbReference type="Proteomes" id="UP000234681">
    <property type="component" value="Chromosome 1"/>
</dbReference>
<dbReference type="Bgee" id="ENSRNOG00000012609">
    <property type="expression patterns" value="Expressed in quadriceps femoris and 17 other cell types or tissues"/>
</dbReference>
<dbReference type="ExpressionAtlas" id="Q9QX75">
    <property type="expression patterns" value="baseline and differential"/>
</dbReference>
<dbReference type="GO" id="GO:0034704">
    <property type="term" value="C:calcium channel complex"/>
    <property type="evidence" value="ECO:0000316"/>
    <property type="project" value="BHF-UCL"/>
</dbReference>
<dbReference type="GO" id="GO:0030314">
    <property type="term" value="C:junctional membrane complex"/>
    <property type="evidence" value="ECO:0000314"/>
    <property type="project" value="RGD"/>
</dbReference>
<dbReference type="GO" id="GO:0014701">
    <property type="term" value="C:junctional sarcoplasmic reticulum membrane"/>
    <property type="evidence" value="ECO:0000314"/>
    <property type="project" value="BHF-UCL"/>
</dbReference>
<dbReference type="GO" id="GO:0005886">
    <property type="term" value="C:plasma membrane"/>
    <property type="evidence" value="ECO:0000314"/>
    <property type="project" value="BHF-UCL"/>
</dbReference>
<dbReference type="GO" id="GO:0042383">
    <property type="term" value="C:sarcolemma"/>
    <property type="evidence" value="ECO:0007669"/>
    <property type="project" value="UniProtKB-SubCell"/>
</dbReference>
<dbReference type="GO" id="GO:0016529">
    <property type="term" value="C:sarcoplasmic reticulum"/>
    <property type="evidence" value="ECO:0000314"/>
    <property type="project" value="RGD"/>
</dbReference>
<dbReference type="GO" id="GO:0030674">
    <property type="term" value="F:protein-macromolecule adaptor activity"/>
    <property type="evidence" value="ECO:0000266"/>
    <property type="project" value="RGD"/>
</dbReference>
<dbReference type="GO" id="GO:0005102">
    <property type="term" value="F:signaling receptor binding"/>
    <property type="evidence" value="ECO:0007669"/>
    <property type="project" value="InterPro"/>
</dbReference>
<dbReference type="GO" id="GO:0031122">
    <property type="term" value="P:cytoplasmic microtubule organization"/>
    <property type="evidence" value="ECO:0000315"/>
    <property type="project" value="RGD"/>
</dbReference>
<dbReference type="GO" id="GO:0090158">
    <property type="term" value="P:endoplasmic reticulum membrane organization"/>
    <property type="evidence" value="ECO:0000315"/>
    <property type="project" value="RGD"/>
</dbReference>
<dbReference type="GO" id="GO:0051649">
    <property type="term" value="P:establishment of localization in cell"/>
    <property type="evidence" value="ECO:0000266"/>
    <property type="project" value="RGD"/>
</dbReference>
<dbReference type="GO" id="GO:0060047">
    <property type="term" value="P:heart contraction"/>
    <property type="evidence" value="ECO:0000266"/>
    <property type="project" value="RGD"/>
</dbReference>
<dbReference type="GO" id="GO:0006874">
    <property type="term" value="P:intracellular calcium ion homeostasis"/>
    <property type="evidence" value="ECO:0000315"/>
    <property type="project" value="RGD"/>
</dbReference>
<dbReference type="GO" id="GO:0014902">
    <property type="term" value="P:myotube differentiation"/>
    <property type="evidence" value="ECO:0000270"/>
    <property type="project" value="RGD"/>
</dbReference>
<dbReference type="GO" id="GO:0051280">
    <property type="term" value="P:negative regulation of release of sequestered calcium ion into cytosol"/>
    <property type="evidence" value="ECO:0000315"/>
    <property type="project" value="RGD"/>
</dbReference>
<dbReference type="GO" id="GO:1901846">
    <property type="term" value="P:positive regulation of cell communication by electrical coupling involved in cardiac conduction"/>
    <property type="evidence" value="ECO:0000266"/>
    <property type="project" value="RGD"/>
</dbReference>
<dbReference type="GO" id="GO:0051281">
    <property type="term" value="P:positive regulation of release of sequestered calcium ion into cytosol"/>
    <property type="evidence" value="ECO:0000315"/>
    <property type="project" value="RGD"/>
</dbReference>
<dbReference type="GO" id="GO:0086036">
    <property type="term" value="P:regulation of cardiac muscle cell membrane potential"/>
    <property type="evidence" value="ECO:0000266"/>
    <property type="project" value="RGD"/>
</dbReference>
<dbReference type="GO" id="GO:0010880">
    <property type="term" value="P:regulation of release of sequestered calcium ion into cytosol by sarcoplasmic reticulum"/>
    <property type="evidence" value="ECO:0000315"/>
    <property type="project" value="RGD"/>
</dbReference>
<dbReference type="GO" id="GO:0014808">
    <property type="term" value="P:release of sequestered calcium ion into cytosol by sarcoplasmic reticulum"/>
    <property type="evidence" value="ECO:0000266"/>
    <property type="project" value="RGD"/>
</dbReference>
<dbReference type="GO" id="GO:1904010">
    <property type="term" value="P:response to Aroclor 1254"/>
    <property type="evidence" value="ECO:0000270"/>
    <property type="project" value="RGD"/>
</dbReference>
<dbReference type="GO" id="GO:0009617">
    <property type="term" value="P:response to bacterium"/>
    <property type="evidence" value="ECO:0000266"/>
    <property type="project" value="RGD"/>
</dbReference>
<dbReference type="InterPro" id="IPR007943">
    <property type="entry name" value="Asp-B-hydro/Triadin_dom"/>
</dbReference>
<dbReference type="InterPro" id="IPR010798">
    <property type="entry name" value="Triadin"/>
</dbReference>
<dbReference type="PANTHER" id="PTHR14106">
    <property type="entry name" value="TRIADIN"/>
    <property type="match status" value="1"/>
</dbReference>
<dbReference type="PANTHER" id="PTHR14106:SF0">
    <property type="entry name" value="TRIADIN"/>
    <property type="match status" value="1"/>
</dbReference>
<dbReference type="Pfam" id="PF05279">
    <property type="entry name" value="Asp-B-Hydro_N"/>
    <property type="match status" value="1"/>
</dbReference>
<reference key="1">
    <citation type="journal article" date="2000" name="J. Biol. Chem.">
        <title>Cloning and characterization of a new isoform of skeletal muscle triadin.</title>
        <authorList>
            <person name="Marty I."/>
            <person name="Thevenon D."/>
            <person name="Scotto C."/>
            <person name="Groh S."/>
            <person name="Sainnier S."/>
            <person name="Robert M."/>
            <person name="Grunwald D."/>
            <person name="Villaz M."/>
        </authorList>
    </citation>
    <scope>NUCLEOTIDE SEQUENCE [MRNA] (ISOFORMS 1 AND 2)</scope>
    <scope>ALTERNATIVE SPLICING</scope>
    <scope>GLYCOSYLATION</scope>
    <scope>TISSUE SPECIFICITY</scope>
    <source>
        <strain>Wistar</strain>
        <tissue>Skeletal muscle</tissue>
    </source>
</reference>
<reference key="2">
    <citation type="journal article" date="2005" name="J. Biol. Chem.">
        <title>Triadins are not triad-specific proteins: two new skeletal muscle triadins possibly involved in the architecture of sarcoplasmic reticulum.</title>
        <authorList>
            <person name="Vassilopoulos S."/>
            <person name="Thevenon D."/>
            <person name="Smida Rezgui S."/>
            <person name="Urbani-Brocard J."/>
            <person name="Chapel A."/>
            <person name="Lacampagne A."/>
            <person name="Lunardi J."/>
            <person name="Dewaard M."/>
            <person name="Marty I."/>
        </authorList>
    </citation>
    <scope>NUCLEOTIDE SEQUENCE [MRNA] (ISOFORMS 3 AND 4)</scope>
    <scope>ALTERNATIVE SPLICING</scope>
    <scope>SUBCELLULAR LOCATION</scope>
    <scope>INTERACTION WITH RYR1</scope>
    <scope>TISSUE SPECIFICITY</scope>
    <source>
        <strain evidence="13">Wistar</strain>
    </source>
</reference>
<reference key="3">
    <citation type="submission" date="2000-01" db="EMBL/GenBank/DDBJ databases">
        <title>Study of molecular characterization and subcellular localization of cardiac triadin in rat.</title>
        <authorList>
            <person name="You H.J."/>
            <person name="Kim D.H."/>
        </authorList>
    </citation>
    <scope>NUCLEOTIDE SEQUENCE [MRNA] (ISOFORM 3)</scope>
    <scope>NUCLEOTIDE SEQUENCE [MRNA] OF 1-310 (ISOFORM 1/2/4)</scope>
    <source>
        <strain evidence="11">Wistar</strain>
        <tissue evidence="11">Heart</tissue>
    </source>
</reference>
<reference key="4">
    <citation type="journal article" date="2004" name="Nature">
        <title>Genome sequence of the Brown Norway rat yields insights into mammalian evolution.</title>
        <authorList>
            <person name="Gibbs R.A."/>
            <person name="Weinstock G.M."/>
            <person name="Metzker M.L."/>
            <person name="Muzny D.M."/>
            <person name="Sodergren E.J."/>
            <person name="Scherer S."/>
            <person name="Scott G."/>
            <person name="Steffen D."/>
            <person name="Worley K.C."/>
            <person name="Burch P.E."/>
            <person name="Okwuonu G."/>
            <person name="Hines S."/>
            <person name="Lewis L."/>
            <person name="Deramo C."/>
            <person name="Delgado O."/>
            <person name="Dugan-Rocha S."/>
            <person name="Miner G."/>
            <person name="Morgan M."/>
            <person name="Hawes A."/>
            <person name="Gill R."/>
            <person name="Holt R.A."/>
            <person name="Adams M.D."/>
            <person name="Amanatides P.G."/>
            <person name="Baden-Tillson H."/>
            <person name="Barnstead M."/>
            <person name="Chin S."/>
            <person name="Evans C.A."/>
            <person name="Ferriera S."/>
            <person name="Fosler C."/>
            <person name="Glodek A."/>
            <person name="Gu Z."/>
            <person name="Jennings D."/>
            <person name="Kraft C.L."/>
            <person name="Nguyen T."/>
            <person name="Pfannkoch C.M."/>
            <person name="Sitter C."/>
            <person name="Sutton G.G."/>
            <person name="Venter J.C."/>
            <person name="Woodage T."/>
            <person name="Smith D."/>
            <person name="Lee H.-M."/>
            <person name="Gustafson E."/>
            <person name="Cahill P."/>
            <person name="Kana A."/>
            <person name="Doucette-Stamm L."/>
            <person name="Weinstock K."/>
            <person name="Fechtel K."/>
            <person name="Weiss R.B."/>
            <person name="Dunn D.M."/>
            <person name="Green E.D."/>
            <person name="Blakesley R.W."/>
            <person name="Bouffard G.G."/>
            <person name="De Jong P.J."/>
            <person name="Osoegawa K."/>
            <person name="Zhu B."/>
            <person name="Marra M."/>
            <person name="Schein J."/>
            <person name="Bosdet I."/>
            <person name="Fjell C."/>
            <person name="Jones S."/>
            <person name="Krzywinski M."/>
            <person name="Mathewson C."/>
            <person name="Siddiqui A."/>
            <person name="Wye N."/>
            <person name="McPherson J."/>
            <person name="Zhao S."/>
            <person name="Fraser C.M."/>
            <person name="Shetty J."/>
            <person name="Shatsman S."/>
            <person name="Geer K."/>
            <person name="Chen Y."/>
            <person name="Abramzon S."/>
            <person name="Nierman W.C."/>
            <person name="Havlak P.H."/>
            <person name="Chen R."/>
            <person name="Durbin K.J."/>
            <person name="Egan A."/>
            <person name="Ren Y."/>
            <person name="Song X.-Z."/>
            <person name="Li B."/>
            <person name="Liu Y."/>
            <person name="Qin X."/>
            <person name="Cawley S."/>
            <person name="Cooney A.J."/>
            <person name="D'Souza L.M."/>
            <person name="Martin K."/>
            <person name="Wu J.Q."/>
            <person name="Gonzalez-Garay M.L."/>
            <person name="Jackson A.R."/>
            <person name="Kalafus K.J."/>
            <person name="McLeod M.P."/>
            <person name="Milosavljevic A."/>
            <person name="Virk D."/>
            <person name="Volkov A."/>
            <person name="Wheeler D.A."/>
            <person name="Zhang Z."/>
            <person name="Bailey J.A."/>
            <person name="Eichler E.E."/>
            <person name="Tuzun E."/>
            <person name="Birney E."/>
            <person name="Mongin E."/>
            <person name="Ureta-Vidal A."/>
            <person name="Woodwark C."/>
            <person name="Zdobnov E."/>
            <person name="Bork P."/>
            <person name="Suyama M."/>
            <person name="Torrents D."/>
            <person name="Alexandersson M."/>
            <person name="Trask B.J."/>
            <person name="Young J.M."/>
            <person name="Huang H."/>
            <person name="Wang H."/>
            <person name="Xing H."/>
            <person name="Daniels S."/>
            <person name="Gietzen D."/>
            <person name="Schmidt J."/>
            <person name="Stevens K."/>
            <person name="Vitt U."/>
            <person name="Wingrove J."/>
            <person name="Camara F."/>
            <person name="Mar Alba M."/>
            <person name="Abril J.F."/>
            <person name="Guigo R."/>
            <person name="Smit A."/>
            <person name="Dubchak I."/>
            <person name="Rubin E.M."/>
            <person name="Couronne O."/>
            <person name="Poliakov A."/>
            <person name="Huebner N."/>
            <person name="Ganten D."/>
            <person name="Goesele C."/>
            <person name="Hummel O."/>
            <person name="Kreitler T."/>
            <person name="Lee Y.-A."/>
            <person name="Monti J."/>
            <person name="Schulz H."/>
            <person name="Zimdahl H."/>
            <person name="Himmelbauer H."/>
            <person name="Lehrach H."/>
            <person name="Jacob H.J."/>
            <person name="Bromberg S."/>
            <person name="Gullings-Handley J."/>
            <person name="Jensen-Seaman M.I."/>
            <person name="Kwitek A.E."/>
            <person name="Lazar J."/>
            <person name="Pasko D."/>
            <person name="Tonellato P.J."/>
            <person name="Twigger S."/>
            <person name="Ponting C.P."/>
            <person name="Duarte J.M."/>
            <person name="Rice S."/>
            <person name="Goodstadt L."/>
            <person name="Beatson S.A."/>
            <person name="Emes R.D."/>
            <person name="Winter E.E."/>
            <person name="Webber C."/>
            <person name="Brandt P."/>
            <person name="Nyakatura G."/>
            <person name="Adetobi M."/>
            <person name="Chiaromonte F."/>
            <person name="Elnitski L."/>
            <person name="Eswara P."/>
            <person name="Hardison R.C."/>
            <person name="Hou M."/>
            <person name="Kolbe D."/>
            <person name="Makova K."/>
            <person name="Miller W."/>
            <person name="Nekrutenko A."/>
            <person name="Riemer C."/>
            <person name="Schwartz S."/>
            <person name="Taylor J."/>
            <person name="Yang S."/>
            <person name="Zhang Y."/>
            <person name="Lindpaintner K."/>
            <person name="Andrews T.D."/>
            <person name="Caccamo M."/>
            <person name="Clamp M."/>
            <person name="Clarke L."/>
            <person name="Curwen V."/>
            <person name="Durbin R.M."/>
            <person name="Eyras E."/>
            <person name="Searle S.M."/>
            <person name="Cooper G.M."/>
            <person name="Batzoglou S."/>
            <person name="Brudno M."/>
            <person name="Sidow A."/>
            <person name="Stone E.A."/>
            <person name="Payseur B.A."/>
            <person name="Bourque G."/>
            <person name="Lopez-Otin C."/>
            <person name="Puente X.S."/>
            <person name="Chakrabarti K."/>
            <person name="Chatterji S."/>
            <person name="Dewey C."/>
            <person name="Pachter L."/>
            <person name="Bray N."/>
            <person name="Yap V.B."/>
            <person name="Caspi A."/>
            <person name="Tesler G."/>
            <person name="Pevzner P.A."/>
            <person name="Haussler D."/>
            <person name="Roskin K.M."/>
            <person name="Baertsch R."/>
            <person name="Clawson H."/>
            <person name="Furey T.S."/>
            <person name="Hinrichs A.S."/>
            <person name="Karolchik D."/>
            <person name="Kent W.J."/>
            <person name="Rosenbloom K.R."/>
            <person name="Trumbower H."/>
            <person name="Weirauch M."/>
            <person name="Cooper D.N."/>
            <person name="Stenson P.D."/>
            <person name="Ma B."/>
            <person name="Brent M."/>
            <person name="Arumugam M."/>
            <person name="Shteynberg D."/>
            <person name="Copley R.R."/>
            <person name="Taylor M.S."/>
            <person name="Riethman H."/>
            <person name="Mudunuri U."/>
            <person name="Peterson J."/>
            <person name="Guyer M."/>
            <person name="Felsenfeld A."/>
            <person name="Old S."/>
            <person name="Mockrin S."/>
            <person name="Collins F.S."/>
        </authorList>
    </citation>
    <scope>NUCLEOTIDE SEQUENCE [LARGE SCALE GENOMIC DNA]</scope>
    <source>
        <strain>Brown Norway</strain>
    </source>
</reference>
<reference key="5">
    <citation type="submission" date="2005-09" db="EMBL/GenBank/DDBJ databases">
        <authorList>
            <person name="Mural R.J."/>
            <person name="Adams M.D."/>
            <person name="Myers E.W."/>
            <person name="Smith H.O."/>
            <person name="Venter J.C."/>
        </authorList>
    </citation>
    <scope>NUCLEOTIDE SEQUENCE [LARGE SCALE GENOMIC DNA]</scope>
    <source>
        <strain>Brown Norway</strain>
    </source>
</reference>
<reference key="6">
    <citation type="journal article" date="2012" name="Nat. Commun.">
        <title>Quantitative maps of protein phosphorylation sites across 14 different rat organs and tissues.</title>
        <authorList>
            <person name="Lundby A."/>
            <person name="Secher A."/>
            <person name="Lage K."/>
            <person name="Nordsborg N.B."/>
            <person name="Dmytriyev A."/>
            <person name="Lundby C."/>
            <person name="Olsen J.V."/>
        </authorList>
    </citation>
    <scope>PHOSPHORYLATION [LARGE SCALE ANALYSIS] AT SER-303 AND SER-306</scope>
    <scope>IDENTIFICATION BY MASS SPECTROMETRY [LARGE SCALE ANALYSIS]</scope>
</reference>
<sequence>MTEITAEGNASITTTVIDNKNGSVPKSPGKVLKRTVTEDIVTTFSSPAAWLLVIALIITWSAVAIVMFDLVDYKNFSASSIAKIGSDPLKLVNDAVEETTDWIYGFFSLLSDIISSDGDEDDEDADEDIDKGEIEEPPLKRKEIQKEKAEKQEKPEKKIQTKVSHREKEKGKEKLKGEKPEKKATHKEKLEKKERTETKMAAKEDKKIKTKEKTEEKAKKEMKVGKQEKAKPAAAKAKETPKTTPKAREKDDKETPAVPKHEQKDQYAFCRYMIDMFVHGDLKPGQSPAVPPPSLTASRPALSTPSLEEKEKEEKKKVEKKVTSDTKKKEKGEAKKKSEKETVIDGKGKEPGKPPETKQTTTKLTTQAAATKDEKKEDSKKMKKPPEEKPKGKKQEKKEKHIEPAKTPKKEHPAPSEKHRKAKAEQAKEEIAPASTKKALHGKKEEKAKTVEQGKDVKPKLPQPQLKKEEKSEPQPKKEVKLETQLKKEEKSEPQVKKEAKLASSEKGQTRKQNITRPEQVIPHGKPEQKVPKQIKAITAEKTEKAERQEKYHPSIKTEGKPEVTDSGKKKIEKPEKESKVPPKQENLQVRNVTRAEKRGKISKDSKDAPAPKKDKDSKDVLHSKKDKEVTNNVSSPKKQKSPISFFQCVYLDGYNGYGFQFPVTPVQHSGENPGKSNSPGQKQQEQ</sequence>
<organism evidence="12">
    <name type="scientific">Rattus norvegicus</name>
    <name type="common">Rat</name>
    <dbReference type="NCBI Taxonomy" id="10116"/>
    <lineage>
        <taxon>Eukaryota</taxon>
        <taxon>Metazoa</taxon>
        <taxon>Chordata</taxon>
        <taxon>Craniata</taxon>
        <taxon>Vertebrata</taxon>
        <taxon>Euteleostomi</taxon>
        <taxon>Mammalia</taxon>
        <taxon>Eutheria</taxon>
        <taxon>Euarchontoglires</taxon>
        <taxon>Glires</taxon>
        <taxon>Rodentia</taxon>
        <taxon>Myomorpha</taxon>
        <taxon>Muroidea</taxon>
        <taxon>Muridae</taxon>
        <taxon>Murinae</taxon>
        <taxon>Rattus</taxon>
    </lineage>
</organism>
<evidence type="ECO:0000250" key="1">
    <source>
        <dbReference type="UniProtKB" id="E9Q9K5"/>
    </source>
</evidence>
<evidence type="ECO:0000250" key="2">
    <source>
        <dbReference type="UniProtKB" id="Q13061"/>
    </source>
</evidence>
<evidence type="ECO:0000250" key="3">
    <source>
        <dbReference type="UniProtKB" id="Q28820"/>
    </source>
</evidence>
<evidence type="ECO:0000255" key="4"/>
<evidence type="ECO:0000256" key="5">
    <source>
        <dbReference type="SAM" id="MobiDB-lite"/>
    </source>
</evidence>
<evidence type="ECO:0000269" key="6">
    <source>
    </source>
</evidence>
<evidence type="ECO:0000269" key="7">
    <source>
    </source>
</evidence>
<evidence type="ECO:0000303" key="8">
    <source>
    </source>
</evidence>
<evidence type="ECO:0000303" key="9">
    <source>
    </source>
</evidence>
<evidence type="ECO:0000305" key="10"/>
<evidence type="ECO:0000312" key="11">
    <source>
        <dbReference type="EMBL" id="AAF29539.1"/>
    </source>
</evidence>
<evidence type="ECO:0000312" key="12">
    <source>
        <dbReference type="EMBL" id="CAB64604.1"/>
    </source>
</evidence>
<evidence type="ECO:0000312" key="13">
    <source>
        <dbReference type="EMBL" id="CAH23274.1"/>
    </source>
</evidence>
<evidence type="ECO:0000312" key="14">
    <source>
        <dbReference type="RGD" id="619856"/>
    </source>
</evidence>
<evidence type="ECO:0007744" key="15">
    <source>
    </source>
</evidence>
<name>TRDN_RAT</name>
<protein>
    <recommendedName>
        <fullName>Triadin</fullName>
    </recommendedName>
</protein>